<keyword id="KW-0025">Alternative splicing</keyword>
<keyword id="KW-0053">Apoptosis</keyword>
<keyword id="KW-0903">Direct protein sequencing</keyword>
<keyword id="KW-0378">Hydrolase</keyword>
<keyword id="KW-0645">Protease</keyword>
<keyword id="KW-1185">Reference proteome</keyword>
<keyword id="KW-0788">Thiol protease</keyword>
<keyword id="KW-0865">Zymogen</keyword>
<gene>
    <name evidence="7 12" type="primary">csp-1</name>
    <name evidence="12" type="ORF">Y48E1B.13</name>
</gene>
<feature type="propeptide" id="PRO_0000439218" description="Removed in mature form by autoprocessing" evidence="6">
    <location>
        <begin position="1"/>
        <end position="273"/>
    </location>
</feature>
<feature type="chain" id="PRO_0000439219" description="Caspase A subunit p16" evidence="7">
    <location>
        <begin position="274"/>
        <end position="418"/>
    </location>
</feature>
<feature type="chain" id="PRO_0000439220" description="Caspase A subunit p14" evidence="7">
    <location>
        <begin position="419"/>
        <end position="536"/>
    </location>
</feature>
<feature type="active site" evidence="1">
    <location>
        <position position="364"/>
    </location>
</feature>
<feature type="active site" evidence="6">
    <location>
        <position position="406"/>
    </location>
</feature>
<feature type="splice variant" id="VSP_058804" description="In isoform b and isoform c." evidence="8">
    <location>
        <begin position="1"/>
        <end position="268"/>
    </location>
</feature>
<feature type="splice variant" id="VSP_058805" description="In isoform c." evidence="8">
    <original>LNMGVPV</original>
    <variation>IEHGCSR</variation>
    <location>
        <begin position="411"/>
        <end position="417"/>
    </location>
</feature>
<feature type="splice variant" id="VSP_058806" description="In isoform c." evidence="8">
    <location>
        <begin position="418"/>
        <end position="536"/>
    </location>
</feature>
<feature type="mutagenesis site" description="Loss of catalytic activity. Loss of autoprocessing." evidence="6">
    <original>C</original>
    <variation>S</variation>
    <location>
        <position position="406"/>
    </location>
</feature>
<evidence type="ECO:0000250" key="1">
    <source>
        <dbReference type="UniProtKB" id="P29466"/>
    </source>
</evidence>
<evidence type="ECO:0000255" key="2"/>
<evidence type="ECO:0000255" key="3">
    <source>
        <dbReference type="RuleBase" id="RU003971"/>
    </source>
</evidence>
<evidence type="ECO:0000269" key="4">
    <source>
    </source>
</evidence>
<evidence type="ECO:0000269" key="5">
    <source>
    </source>
</evidence>
<evidence type="ECO:0000269" key="6">
    <source>
    </source>
</evidence>
<evidence type="ECO:0000303" key="7">
    <source>
    </source>
</evidence>
<evidence type="ECO:0000305" key="8"/>
<evidence type="ECO:0000305" key="9">
    <source>
    </source>
</evidence>
<evidence type="ECO:0000312" key="10">
    <source>
        <dbReference type="EMBL" id="AAC98292.1"/>
    </source>
</evidence>
<evidence type="ECO:0000312" key="11">
    <source>
        <dbReference type="Proteomes" id="UP000001940"/>
    </source>
</evidence>
<evidence type="ECO:0000312" key="12">
    <source>
        <dbReference type="WormBase" id="Y48E1B.13a"/>
    </source>
</evidence>
<evidence type="ECO:0000312" key="13">
    <source>
        <dbReference type="WormBase" id="Y48E1B.13b"/>
    </source>
</evidence>
<evidence type="ECO:0000312" key="14">
    <source>
        <dbReference type="WormBase" id="Y48E1B.13c"/>
    </source>
</evidence>
<protein>
    <recommendedName>
        <fullName evidence="8">Caspase A</fullName>
        <ecNumber evidence="6">3.4.22.36</ecNumber>
    </recommendedName>
    <component>
        <recommendedName>
            <fullName evidence="9">Caspase A subunit p16</fullName>
        </recommendedName>
    </component>
    <component>
        <recommendedName>
            <fullName evidence="9">Caspase A subunit p14</fullName>
        </recommendedName>
    </component>
</protein>
<proteinExistence type="evidence at protein level"/>
<organism evidence="11">
    <name type="scientific">Caenorhabditis elegans</name>
    <dbReference type="NCBI Taxonomy" id="6239"/>
    <lineage>
        <taxon>Eukaryota</taxon>
        <taxon>Metazoa</taxon>
        <taxon>Ecdysozoa</taxon>
        <taxon>Nematoda</taxon>
        <taxon>Chromadorea</taxon>
        <taxon>Rhabditida</taxon>
        <taxon>Rhabditina</taxon>
        <taxon>Rhabditomorpha</taxon>
        <taxon>Rhabditoidea</taxon>
        <taxon>Rhabditidae</taxon>
        <taxon>Peloderinae</taxon>
        <taxon>Caenorhabditis</taxon>
    </lineage>
</organism>
<dbReference type="EC" id="3.4.22.36" evidence="6"/>
<dbReference type="EMBL" id="AF088285">
    <property type="protein sequence ID" value="AAC98292.1"/>
    <property type="molecule type" value="mRNA"/>
</dbReference>
<dbReference type="EMBL" id="AF088286">
    <property type="protein sequence ID" value="AAC98293.1"/>
    <property type="molecule type" value="mRNA"/>
</dbReference>
<dbReference type="EMBL" id="AF088287">
    <property type="protein sequence ID" value="AAC98294.1"/>
    <property type="molecule type" value="mRNA"/>
</dbReference>
<dbReference type="EMBL" id="BX284602">
    <property type="protein sequence ID" value="CAB07698.2"/>
    <property type="molecule type" value="Genomic_DNA"/>
</dbReference>
<dbReference type="EMBL" id="BX284602">
    <property type="protein sequence ID" value="CAD18879.1"/>
    <property type="molecule type" value="Genomic_DNA"/>
</dbReference>
<dbReference type="EMBL" id="BX284602">
    <property type="protein sequence ID" value="CAD18880.1"/>
    <property type="molecule type" value="Genomic_DNA"/>
</dbReference>
<dbReference type="PIR" id="T27021">
    <property type="entry name" value="T27021"/>
</dbReference>
<dbReference type="PIR" id="T43633">
    <property type="entry name" value="T43633"/>
</dbReference>
<dbReference type="PIR" id="T43637">
    <property type="entry name" value="T43637"/>
</dbReference>
<dbReference type="RefSeq" id="NP_001022452.1">
    <molecule id="G5EBM1-1"/>
    <property type="nucleotide sequence ID" value="NM_001027281.1"/>
</dbReference>
<dbReference type="RefSeq" id="NP_001022453.1">
    <molecule id="G5EBM1-2"/>
    <property type="nucleotide sequence ID" value="NM_001027282.1"/>
</dbReference>
<dbReference type="RefSeq" id="NP_001022454.1">
    <molecule id="G5EBM1-3"/>
    <property type="nucleotide sequence ID" value="NM_001027283.1"/>
</dbReference>
<dbReference type="SMR" id="G5EBM1"/>
<dbReference type="FunCoup" id="G5EBM1">
    <property type="interactions" value="75"/>
</dbReference>
<dbReference type="STRING" id="6239.Y48E1B.13a.1"/>
<dbReference type="MEROPS" id="C14.A06"/>
<dbReference type="PaxDb" id="6239-Y48E1B.13a"/>
<dbReference type="EnsemblMetazoa" id="Y48E1B.13a.1">
    <molecule id="G5EBM1-1"/>
    <property type="protein sequence ID" value="Y48E1B.13a.1"/>
    <property type="gene ID" value="WBGene00000819"/>
</dbReference>
<dbReference type="EnsemblMetazoa" id="Y48E1B.13b.1">
    <molecule id="G5EBM1-2"/>
    <property type="protein sequence ID" value="Y48E1B.13b.1"/>
    <property type="gene ID" value="WBGene00000819"/>
</dbReference>
<dbReference type="EnsemblMetazoa" id="Y48E1B.13c.1">
    <molecule id="G5EBM1-3"/>
    <property type="protein sequence ID" value="Y48E1B.13c.1"/>
    <property type="gene ID" value="WBGene00000819"/>
</dbReference>
<dbReference type="GeneID" id="175007"/>
<dbReference type="KEGG" id="cel:CELE_Y48E1B.13"/>
<dbReference type="AGR" id="WB:WBGene00000819"/>
<dbReference type="CTD" id="175007"/>
<dbReference type="WormBase" id="Y48E1B.13a">
    <molecule id="G5EBM1-1"/>
    <property type="protein sequence ID" value="CE29378"/>
    <property type="gene ID" value="WBGene00000819"/>
    <property type="gene designation" value="csp-1"/>
</dbReference>
<dbReference type="WormBase" id="Y48E1B.13b">
    <molecule id="G5EBM1-2"/>
    <property type="protein sequence ID" value="CE30016"/>
    <property type="gene ID" value="WBGene00000819"/>
    <property type="gene designation" value="csp-1"/>
</dbReference>
<dbReference type="WormBase" id="Y48E1B.13c">
    <molecule id="G5EBM1-3"/>
    <property type="protein sequence ID" value="CE30017"/>
    <property type="gene ID" value="WBGene00000819"/>
    <property type="gene designation" value="csp-1"/>
</dbReference>
<dbReference type="eggNOG" id="KOG3573">
    <property type="taxonomic scope" value="Eukaryota"/>
</dbReference>
<dbReference type="GeneTree" id="ENSGT00940000169659"/>
<dbReference type="HOGENOM" id="CLU_508301_0_0_1"/>
<dbReference type="InParanoid" id="G5EBM1"/>
<dbReference type="OrthoDB" id="6114029at2759"/>
<dbReference type="PhylomeDB" id="G5EBM1"/>
<dbReference type="PRO" id="PR:G5EBM1"/>
<dbReference type="Proteomes" id="UP000001940">
    <property type="component" value="Chromosome II"/>
</dbReference>
<dbReference type="Bgee" id="WBGene00000819">
    <property type="expression patterns" value="Expressed in reproductive system and 4 other cell types or tissues"/>
</dbReference>
<dbReference type="GO" id="GO:0043073">
    <property type="term" value="C:germ cell nucleus"/>
    <property type="evidence" value="ECO:0000314"/>
    <property type="project" value="UniProtKB"/>
</dbReference>
<dbReference type="GO" id="GO:0004197">
    <property type="term" value="F:cysteine-type endopeptidase activity"/>
    <property type="evidence" value="ECO:0000315"/>
    <property type="project" value="UniProtKB"/>
</dbReference>
<dbReference type="GO" id="GO:0006915">
    <property type="term" value="P:apoptotic process"/>
    <property type="evidence" value="ECO:0007669"/>
    <property type="project" value="UniProtKB-KW"/>
</dbReference>
<dbReference type="GO" id="GO:1905803">
    <property type="term" value="P:negative regulation of cellular response to manganese ion"/>
    <property type="evidence" value="ECO:0000315"/>
    <property type="project" value="UniProtKB"/>
</dbReference>
<dbReference type="GO" id="GO:1904747">
    <property type="term" value="P:positive regulation of apoptotic process involved in development"/>
    <property type="evidence" value="ECO:0000315"/>
    <property type="project" value="UniProtKB"/>
</dbReference>
<dbReference type="GO" id="GO:1905845">
    <property type="term" value="P:positive regulation of cellular response to gamma radiation"/>
    <property type="evidence" value="ECO:0000316"/>
    <property type="project" value="UniProtKB"/>
</dbReference>
<dbReference type="GO" id="GO:0043525">
    <property type="term" value="P:positive regulation of neuron apoptotic process"/>
    <property type="evidence" value="ECO:0000315"/>
    <property type="project" value="UniProtKB"/>
</dbReference>
<dbReference type="GO" id="GO:0016540">
    <property type="term" value="P:protein autoprocessing"/>
    <property type="evidence" value="ECO:0000315"/>
    <property type="project" value="UniProtKB"/>
</dbReference>
<dbReference type="GO" id="GO:0016485">
    <property type="term" value="P:protein processing"/>
    <property type="evidence" value="ECO:0000315"/>
    <property type="project" value="UniProtKB"/>
</dbReference>
<dbReference type="GO" id="GO:0006508">
    <property type="term" value="P:proteolysis"/>
    <property type="evidence" value="ECO:0007669"/>
    <property type="project" value="UniProtKB-KW"/>
</dbReference>
<dbReference type="CDD" id="cd00032">
    <property type="entry name" value="CASc"/>
    <property type="match status" value="1"/>
</dbReference>
<dbReference type="Gene3D" id="3.40.50.1460">
    <property type="match status" value="1"/>
</dbReference>
<dbReference type="InterPro" id="IPR029030">
    <property type="entry name" value="Caspase-like_dom_sf"/>
</dbReference>
<dbReference type="InterPro" id="IPR052039">
    <property type="entry name" value="Caspase-related_regulators"/>
</dbReference>
<dbReference type="InterPro" id="IPR016129">
    <property type="entry name" value="Caspase_his_AS"/>
</dbReference>
<dbReference type="InterPro" id="IPR011600">
    <property type="entry name" value="Pept_C14_caspase"/>
</dbReference>
<dbReference type="InterPro" id="IPR002138">
    <property type="entry name" value="Pept_C14_p10"/>
</dbReference>
<dbReference type="InterPro" id="IPR001309">
    <property type="entry name" value="Pept_C14_p20"/>
</dbReference>
<dbReference type="InterPro" id="IPR015917">
    <property type="entry name" value="Pept_C14A"/>
</dbReference>
<dbReference type="InterPro" id="IPR006570">
    <property type="entry name" value="SPK_dom"/>
</dbReference>
<dbReference type="PANTHER" id="PTHR22576:SF41">
    <property type="entry name" value="CASPASE 14, APOPTOSIS-RELATED CYSTEINE PEPTIDASE"/>
    <property type="match status" value="1"/>
</dbReference>
<dbReference type="PANTHER" id="PTHR22576">
    <property type="entry name" value="MUCOSA ASSOCIATED LYMPHOID TISSUE LYMPHOMA TRANSLOCATION PROTEIN 1/PARACASPASE"/>
    <property type="match status" value="1"/>
</dbReference>
<dbReference type="Pfam" id="PF00656">
    <property type="entry name" value="Peptidase_C14"/>
    <property type="match status" value="1"/>
</dbReference>
<dbReference type="Pfam" id="PF04435">
    <property type="entry name" value="SPK"/>
    <property type="match status" value="1"/>
</dbReference>
<dbReference type="PRINTS" id="PR00376">
    <property type="entry name" value="IL1BCENZYME"/>
</dbReference>
<dbReference type="SMART" id="SM00115">
    <property type="entry name" value="CASc"/>
    <property type="match status" value="1"/>
</dbReference>
<dbReference type="SMART" id="SM00583">
    <property type="entry name" value="SPK"/>
    <property type="match status" value="1"/>
</dbReference>
<dbReference type="SUPFAM" id="SSF52129">
    <property type="entry name" value="Caspase-like"/>
    <property type="match status" value="1"/>
</dbReference>
<dbReference type="PROSITE" id="PS01121">
    <property type="entry name" value="CASPASE_HIS"/>
    <property type="match status" value="1"/>
</dbReference>
<dbReference type="PROSITE" id="PS50207">
    <property type="entry name" value="CASPASE_P10"/>
    <property type="match status" value="1"/>
</dbReference>
<dbReference type="PROSITE" id="PS50208">
    <property type="entry name" value="CASPASE_P20"/>
    <property type="match status" value="1"/>
</dbReference>
<accession>G5EBM1</accession>
<accession>G5EBN4</accession>
<accession>G5EG94</accession>
<name>CSP1_CAEEL</name>
<comment type="function">
    <text evidence="4 5 6">Cysteine protease which, in vitro, cleaves itself and caspase ced-3 into their mature active forms (PubMed:9857046). Also cleaves, in vitro, inactive caspase csp-2 isoform b (PubMed:9857046). Required maternally to induce apoptosis in a subset of cells fated to die during embryogenesis, mostly independently of the ced-9, ced-4 and ced-3 canonical apoptosis pathway (PubMed:23505386). Involved in the degeneration of dopaminergic CEP neurons in response to high Mn(2+) levels (PubMed:23721876).</text>
</comment>
<comment type="function">
    <molecule>Isoform a</molecule>
    <text evidence="4">Dispensable for regulating apoptosis during embryogenesis.</text>
</comment>
<comment type="catalytic activity">
    <reaction evidence="6">
        <text>Strict requirement for an Asp residue at position P1 and has a preferred cleavage sequence of Tyr-Val-Ala-Asp-|-.</text>
        <dbReference type="EC" id="3.4.22.36"/>
    </reaction>
</comment>
<comment type="activity regulation">
    <text evidence="6">Inhibited by cysteine protease inhibitor iodoacetic acid (CH3COOI) but not by N-[N-(L-3-transcarboxirane-2-carbonyl)-leucyl]-agmatine (E-64) or benzyloxycarbonyl-DEVD-fluoro-methyl ketone (Z-DEVD-FMK).</text>
</comment>
<comment type="subunit">
    <text evidence="7">Heterodimer formed by the tight association of the large subunit p16 and the small subunit p14.</text>
</comment>
<comment type="alternative products">
    <event type="alternative splicing"/>
    <isoform>
        <id>G5EBM1-1</id>
        <name evidence="12">a</name>
        <sequence type="displayed"/>
    </isoform>
    <isoform>
        <id>G5EBM1-2</id>
        <name evidence="13">b</name>
        <sequence type="described" ref="VSP_058804"/>
    </isoform>
    <isoform>
        <id>G5EBM1-3</id>
        <name evidence="14">c</name>
        <sequence type="described" ref="VSP_058804 VSP_058805 VSP_058806"/>
    </isoform>
</comment>
<comment type="tissue specificity">
    <text evidence="4">Isoform a: Expression is restricted to the late germline pachytene stage of meiosis I in both L4 larvae and adult hermaphrodite gonads. Isoform b: Expression is restricted to the late germline pachytene stage of meiosis I in both L4 larvae and adult hermaphrodite gonads.</text>
</comment>
<comment type="PTM">
    <text evidence="6">Autocatalytic cleavage removes the propeptide and generates the two active subunits p16 and p14 in vitro. Cannot be cleaved by ced-3 in vitro.</text>
</comment>
<comment type="disruption phenotype">
    <text evidence="4 5">Survival of touch neurons and several pharyngeal cells is not affected during development and no extra pharyngeal cells caused by impaired apoptosis are produced (PubMed:23505386). Basal and ionizing radiation-induced germline apoptosis are normal (PubMed:23505386). In a ced-3 n2427 mutant background, more animals have the M4 sister cell that survives (PubMed:23505386). In a csp-3 n4872, csp-2 n4871 and ced-3 n3692 mutant background where the canonical apoptotic pathway is impaired, 16 percent of animals have still 1 or more cell corpses that are morphologically apoptotic and are internalized by engulfing cells (PubMed:23505386). In addition, apoptosis of the male linker cell occurs normally (PubMed:23505386). RNAi-mediated knockdown causes a 50 percent inhibition of Mn(2+)-induced dopaminergic CEP neuron degeneration (PubMed:23721876).</text>
</comment>
<comment type="similarity">
    <text evidence="2 3">Belongs to the peptidase C14A family.</text>
</comment>
<sequence length="536" mass="61467">MVLKTIEDNCKSQFDDDLVEDFNNFQTTSSMSSSTTISTEDFNTIEIESTFEICRSGSYTEEPILGENDEFLIDFEMERFLKFLKDKTKQVEKRKEPFSQKEIYAVFQRRIKSELCIETVKKKFQPLLPNAIQTCEFDEETMIRMIYGAGIRIDSVDFWNRFTSKATISLDCYSRLISYSSDSLTLSGTHRSGFTYHWISTPPVTYHRTENKDPNIQEPSPVEFLDVQSSLGSSMKPPILDKPTKLDDPAETRHDCSYSLEEYDSQSRMPRTDAKKSNHKHKYCYEMNSNPRGTVLILSNENFKNMERRVGTKQDEVNLTKLFQKLQYTVICKRNLEAESMLEAIKEFAEMAHTDSIILFLLSHGDGAGSVFGIDDMPVNVMEVSTYLAYHQNLLLKPKWVAVSACRGGKLNMGVPVDGLPALEDKCAPISKFWNLMMSRIMPGTFTSLNADVIISFSTTDGFTSYRDEEAGTWYIKSMCKVFNKHSKTMHLLDILTETGRNVVTKYENVQGNVVLKQAPEILSRLTKQWHFSRSM</sequence>
<reference evidence="10" key="1">
    <citation type="journal article" date="1998" name="J. Biol. Chem.">
        <title>Identification of multiple Caenorhabditis elegans caspases and their potential roles in proteolytic cascades.</title>
        <authorList>
            <person name="Shaham S."/>
        </authorList>
    </citation>
    <scope>NUCLEOTIDE SEQUENCE [MRNA] (ISOFORMS A; B AND C)</scope>
    <scope>PARTIAL PROTEIN SEQUENCE</scope>
    <scope>FUNCTION</scope>
    <scope>CATALYTIC ACTIVITY</scope>
    <scope>ACTIVITY REGULATION</scope>
    <scope>SUBUNIT</scope>
    <scope>PROTEOLYTIC CLEAVAGE</scope>
    <scope>ACTIVE SITE</scope>
    <scope>MUTAGENESIS OF CYS-406</scope>
    <source>
        <strain evidence="10">Bristol N2</strain>
    </source>
</reference>
<reference evidence="11" key="2">
    <citation type="journal article" date="1998" name="Science">
        <title>Genome sequence of the nematode C. elegans: a platform for investigating biology.</title>
        <authorList>
            <consortium name="The C. elegans sequencing consortium"/>
        </authorList>
    </citation>
    <scope>NUCLEOTIDE SEQUENCE [LARGE SCALE GENOMIC DNA]</scope>
    <source>
        <strain evidence="11">Bristol N2</strain>
    </source>
</reference>
<reference evidence="8" key="3">
    <citation type="journal article" date="2013" name="NeuroToxicology">
        <title>The Nrf2/SKN-1-dependent glutathione S-transferase pi homologue GST-1 inhibits dopamine neuron degeneration in a Caenorhabditis elegans model of manganism.</title>
        <authorList>
            <person name="Settivari R."/>
            <person name="VanDuyn N."/>
            <person name="LeVora J."/>
            <person name="Nass R."/>
        </authorList>
    </citation>
    <scope>FUNCTION</scope>
    <scope>DISRUPTION PHENOTYPE</scope>
</reference>
<reference evidence="8" key="4">
    <citation type="journal article" date="2013" name="PLoS Genet.">
        <title>Both the caspase CSP-1 and a caspase-independent pathway promote programmed cell death in parallel to the canonical pathway for apoptosis in Caenorhabditis elegans.</title>
        <authorList>
            <person name="Denning D.P."/>
            <person name="Hatch V."/>
            <person name="Horvitz H.R."/>
        </authorList>
    </citation>
    <scope>FUNCTION (ISOFORMS A; B AND C)</scope>
    <scope>DISRUPTION PHENOTYPE</scope>
</reference>